<comment type="function">
    <text evidence="1">Produces ATP from ADP in the presence of a proton gradient across the membrane. The catalytic sites are hosted primarily by the beta subunits.</text>
</comment>
<comment type="catalytic activity">
    <reaction evidence="1">
        <text>ATP + H2O + 4 H(+)(in) = ADP + phosphate + 5 H(+)(out)</text>
        <dbReference type="Rhea" id="RHEA:57720"/>
        <dbReference type="ChEBI" id="CHEBI:15377"/>
        <dbReference type="ChEBI" id="CHEBI:15378"/>
        <dbReference type="ChEBI" id="CHEBI:30616"/>
        <dbReference type="ChEBI" id="CHEBI:43474"/>
        <dbReference type="ChEBI" id="CHEBI:456216"/>
        <dbReference type="EC" id="7.1.2.2"/>
    </reaction>
</comment>
<comment type="subunit">
    <text evidence="1">F-type ATPases have 2 components, CF(1) - the catalytic core - and CF(0) - the membrane proton channel. CF(1) has five subunits: alpha(3), beta(3), gamma(1), delta(1), epsilon(1). CF(0) has four main subunits: a(1), b(1), b'(1) and c(9-12).</text>
</comment>
<comment type="subcellular location">
    <subcellularLocation>
        <location evidence="1">Cell inner membrane</location>
        <topology evidence="1">Peripheral membrane protein</topology>
    </subcellularLocation>
</comment>
<comment type="similarity">
    <text evidence="1">Belongs to the ATPase alpha/beta chains family.</text>
</comment>
<dbReference type="EC" id="7.1.2.2" evidence="1"/>
<dbReference type="EMBL" id="CU234118">
    <property type="protein sequence ID" value="CAL74366.1"/>
    <property type="molecule type" value="Genomic_DNA"/>
</dbReference>
<dbReference type="RefSeq" id="WP_006609208.1">
    <property type="nucleotide sequence ID" value="NC_009445.1"/>
</dbReference>
<dbReference type="SMR" id="A4YKE0"/>
<dbReference type="STRING" id="114615.BRADO0419"/>
<dbReference type="KEGG" id="bra:BRADO0419"/>
<dbReference type="eggNOG" id="COG0055">
    <property type="taxonomic scope" value="Bacteria"/>
</dbReference>
<dbReference type="HOGENOM" id="CLU_022398_0_2_5"/>
<dbReference type="OrthoDB" id="9801639at2"/>
<dbReference type="Proteomes" id="UP000001994">
    <property type="component" value="Chromosome"/>
</dbReference>
<dbReference type="GO" id="GO:0005886">
    <property type="term" value="C:plasma membrane"/>
    <property type="evidence" value="ECO:0007669"/>
    <property type="project" value="UniProtKB-SubCell"/>
</dbReference>
<dbReference type="GO" id="GO:0045259">
    <property type="term" value="C:proton-transporting ATP synthase complex"/>
    <property type="evidence" value="ECO:0007669"/>
    <property type="project" value="UniProtKB-KW"/>
</dbReference>
<dbReference type="GO" id="GO:0005524">
    <property type="term" value="F:ATP binding"/>
    <property type="evidence" value="ECO:0007669"/>
    <property type="project" value="UniProtKB-UniRule"/>
</dbReference>
<dbReference type="GO" id="GO:0016887">
    <property type="term" value="F:ATP hydrolysis activity"/>
    <property type="evidence" value="ECO:0007669"/>
    <property type="project" value="InterPro"/>
</dbReference>
<dbReference type="GO" id="GO:0046933">
    <property type="term" value="F:proton-transporting ATP synthase activity, rotational mechanism"/>
    <property type="evidence" value="ECO:0007669"/>
    <property type="project" value="UniProtKB-UniRule"/>
</dbReference>
<dbReference type="CDD" id="cd18110">
    <property type="entry name" value="ATP-synt_F1_beta_C"/>
    <property type="match status" value="1"/>
</dbReference>
<dbReference type="CDD" id="cd18115">
    <property type="entry name" value="ATP-synt_F1_beta_N"/>
    <property type="match status" value="1"/>
</dbReference>
<dbReference type="CDD" id="cd01133">
    <property type="entry name" value="F1-ATPase_beta_CD"/>
    <property type="match status" value="1"/>
</dbReference>
<dbReference type="FunFam" id="1.10.1140.10:FF:000001">
    <property type="entry name" value="ATP synthase subunit beta"/>
    <property type="match status" value="1"/>
</dbReference>
<dbReference type="FunFam" id="2.40.10.170:FF:000005">
    <property type="entry name" value="ATP synthase subunit beta"/>
    <property type="match status" value="1"/>
</dbReference>
<dbReference type="FunFam" id="3.40.50.300:FF:000026">
    <property type="entry name" value="ATP synthase subunit beta"/>
    <property type="match status" value="1"/>
</dbReference>
<dbReference type="Gene3D" id="2.40.10.170">
    <property type="match status" value="1"/>
</dbReference>
<dbReference type="Gene3D" id="1.10.1140.10">
    <property type="entry name" value="Bovine Mitochondrial F1-atpase, Atp Synthase Beta Chain, Chain D, domain 3"/>
    <property type="match status" value="1"/>
</dbReference>
<dbReference type="Gene3D" id="3.40.50.300">
    <property type="entry name" value="P-loop containing nucleotide triphosphate hydrolases"/>
    <property type="match status" value="1"/>
</dbReference>
<dbReference type="HAMAP" id="MF_01347">
    <property type="entry name" value="ATP_synth_beta_bact"/>
    <property type="match status" value="1"/>
</dbReference>
<dbReference type="InterPro" id="IPR003593">
    <property type="entry name" value="AAA+_ATPase"/>
</dbReference>
<dbReference type="InterPro" id="IPR055190">
    <property type="entry name" value="ATP-synt_VA_C"/>
</dbReference>
<dbReference type="InterPro" id="IPR005722">
    <property type="entry name" value="ATP_synth_F1_bsu"/>
</dbReference>
<dbReference type="InterPro" id="IPR020003">
    <property type="entry name" value="ATPase_a/bsu_AS"/>
</dbReference>
<dbReference type="InterPro" id="IPR050053">
    <property type="entry name" value="ATPase_alpha/beta_chains"/>
</dbReference>
<dbReference type="InterPro" id="IPR004100">
    <property type="entry name" value="ATPase_F1/V1/A1_a/bsu_N"/>
</dbReference>
<dbReference type="InterPro" id="IPR036121">
    <property type="entry name" value="ATPase_F1/V1/A1_a/bsu_N_sf"/>
</dbReference>
<dbReference type="InterPro" id="IPR000194">
    <property type="entry name" value="ATPase_F1/V1/A1_a/bsu_nucl-bd"/>
</dbReference>
<dbReference type="InterPro" id="IPR024034">
    <property type="entry name" value="ATPase_F1/V1_b/a_C"/>
</dbReference>
<dbReference type="InterPro" id="IPR027417">
    <property type="entry name" value="P-loop_NTPase"/>
</dbReference>
<dbReference type="NCBIfam" id="TIGR01039">
    <property type="entry name" value="atpD"/>
    <property type="match status" value="1"/>
</dbReference>
<dbReference type="PANTHER" id="PTHR15184">
    <property type="entry name" value="ATP SYNTHASE"/>
    <property type="match status" value="1"/>
</dbReference>
<dbReference type="PANTHER" id="PTHR15184:SF71">
    <property type="entry name" value="ATP SYNTHASE SUBUNIT BETA, MITOCHONDRIAL"/>
    <property type="match status" value="1"/>
</dbReference>
<dbReference type="Pfam" id="PF00006">
    <property type="entry name" value="ATP-synt_ab"/>
    <property type="match status" value="1"/>
</dbReference>
<dbReference type="Pfam" id="PF02874">
    <property type="entry name" value="ATP-synt_ab_N"/>
    <property type="match status" value="1"/>
</dbReference>
<dbReference type="Pfam" id="PF22919">
    <property type="entry name" value="ATP-synt_VA_C"/>
    <property type="match status" value="1"/>
</dbReference>
<dbReference type="PIRSF" id="PIRSF039072">
    <property type="entry name" value="ATPase_subunit_beta"/>
    <property type="match status" value="1"/>
</dbReference>
<dbReference type="SMART" id="SM00382">
    <property type="entry name" value="AAA"/>
    <property type="match status" value="1"/>
</dbReference>
<dbReference type="SUPFAM" id="SSF47917">
    <property type="entry name" value="C-terminal domain of alpha and beta subunits of F1 ATP synthase"/>
    <property type="match status" value="1"/>
</dbReference>
<dbReference type="SUPFAM" id="SSF50615">
    <property type="entry name" value="N-terminal domain of alpha and beta subunits of F1 ATP synthase"/>
    <property type="match status" value="1"/>
</dbReference>
<dbReference type="SUPFAM" id="SSF52540">
    <property type="entry name" value="P-loop containing nucleoside triphosphate hydrolases"/>
    <property type="match status" value="1"/>
</dbReference>
<dbReference type="PROSITE" id="PS00152">
    <property type="entry name" value="ATPASE_ALPHA_BETA"/>
    <property type="match status" value="1"/>
</dbReference>
<reference key="1">
    <citation type="journal article" date="2007" name="Science">
        <title>Legumes symbioses: absence of nod genes in photosynthetic bradyrhizobia.</title>
        <authorList>
            <person name="Giraud E."/>
            <person name="Moulin L."/>
            <person name="Vallenet D."/>
            <person name="Barbe V."/>
            <person name="Cytryn E."/>
            <person name="Avarre J.-C."/>
            <person name="Jaubert M."/>
            <person name="Simon D."/>
            <person name="Cartieaux F."/>
            <person name="Prin Y."/>
            <person name="Bena G."/>
            <person name="Hannibal L."/>
            <person name="Fardoux J."/>
            <person name="Kojadinovic M."/>
            <person name="Vuillet L."/>
            <person name="Lajus A."/>
            <person name="Cruveiller S."/>
            <person name="Rouy Z."/>
            <person name="Mangenot S."/>
            <person name="Segurens B."/>
            <person name="Dossat C."/>
            <person name="Franck W.L."/>
            <person name="Chang W.-S."/>
            <person name="Saunders E."/>
            <person name="Bruce D."/>
            <person name="Richardson P."/>
            <person name="Normand P."/>
            <person name="Dreyfus B."/>
            <person name="Pignol D."/>
            <person name="Stacey G."/>
            <person name="Emerich D."/>
            <person name="Vermeglio A."/>
            <person name="Medigue C."/>
            <person name="Sadowsky M."/>
        </authorList>
    </citation>
    <scope>NUCLEOTIDE SEQUENCE [LARGE SCALE GENOMIC DNA]</scope>
    <source>
        <strain>ORS 278</strain>
    </source>
</reference>
<evidence type="ECO:0000255" key="1">
    <source>
        <dbReference type="HAMAP-Rule" id="MF_01347"/>
    </source>
</evidence>
<gene>
    <name evidence="1" type="primary">atpD</name>
    <name type="ordered locus">BRADO0419</name>
</gene>
<proteinExistence type="inferred from homology"/>
<name>ATPB_BRASO</name>
<protein>
    <recommendedName>
        <fullName evidence="1">ATP synthase subunit beta</fullName>
        <ecNumber evidence="1">7.1.2.2</ecNumber>
    </recommendedName>
    <alternativeName>
        <fullName evidence="1">ATP synthase F1 sector subunit beta</fullName>
    </alternativeName>
    <alternativeName>
        <fullName evidence="1">F-ATPase subunit beta</fullName>
    </alternativeName>
</protein>
<feature type="chain" id="PRO_1000055097" description="ATP synthase subunit beta">
    <location>
        <begin position="1"/>
        <end position="480"/>
    </location>
</feature>
<feature type="binding site" evidence="1">
    <location>
        <begin position="154"/>
        <end position="161"/>
    </location>
    <ligand>
        <name>ATP</name>
        <dbReference type="ChEBI" id="CHEBI:30616"/>
    </ligand>
</feature>
<keyword id="KW-0066">ATP synthesis</keyword>
<keyword id="KW-0067">ATP-binding</keyword>
<keyword id="KW-0997">Cell inner membrane</keyword>
<keyword id="KW-1003">Cell membrane</keyword>
<keyword id="KW-0139">CF(1)</keyword>
<keyword id="KW-0375">Hydrogen ion transport</keyword>
<keyword id="KW-0406">Ion transport</keyword>
<keyword id="KW-0472">Membrane</keyword>
<keyword id="KW-0547">Nucleotide-binding</keyword>
<keyword id="KW-1185">Reference proteome</keyword>
<keyword id="KW-1278">Translocase</keyword>
<keyword id="KW-0813">Transport</keyword>
<sequence length="480" mass="51228">MATAANQIGRVTQVIGAVVDVQFEGHLPAILNSLETKNGGNRLVLEVAQHLGESTVRAIAMDTTEGLVRGQEVTDTGAPIRVPVGEGTLGRIINVIGEPIDEAGPVKADNVRAIHQEAPTYTDQSTEAEILVTGIKVVDLLAPYAKGGKIGLFGGAGVGKTVLIQELINNVAKAHGGYSVFAGVGERTREGNDLYHEFIESKVNADPHNPDPSVKSKCALVFGQMNEPPGARARVALTGLTIAEDFRDKGQDVLFFVDNIFRFTQAGSEVSALLGRIPSAVGYQPTLATDMGALQERITTTTKGSITSVQAIYVPADDLTDPAPATSFAHLDATTTLSRSIAEKGIYPAVDPLDSTSRMLSPLVVGEEHYAVARQVQQVLQRYKALQDIIAILGMDELSEEDKLTVARARKVERFMSQPFHVAEIFTGSPGKFVELADTIKGFKGLVEGKYDHLPEAAFYMVGTIEEAVEKGKKLAAEAA</sequence>
<organism>
    <name type="scientific">Bradyrhizobium sp. (strain ORS 278)</name>
    <dbReference type="NCBI Taxonomy" id="114615"/>
    <lineage>
        <taxon>Bacteria</taxon>
        <taxon>Pseudomonadati</taxon>
        <taxon>Pseudomonadota</taxon>
        <taxon>Alphaproteobacteria</taxon>
        <taxon>Hyphomicrobiales</taxon>
        <taxon>Nitrobacteraceae</taxon>
        <taxon>Bradyrhizobium</taxon>
    </lineage>
</organism>
<accession>A4YKE0</accession>